<proteinExistence type="evidence at protein level"/>
<dbReference type="EC" id="4.1.1.94" evidence="1"/>
<dbReference type="EMBL" id="BC079052">
    <property type="protein sequence ID" value="AAH79052.1"/>
    <property type="molecule type" value="mRNA"/>
</dbReference>
<dbReference type="RefSeq" id="NP_001007735.1">
    <property type="nucleotide sequence ID" value="NM_001007734.1"/>
</dbReference>
<dbReference type="RefSeq" id="NP_001416058.1">
    <property type="nucleotide sequence ID" value="NM_001429129.1"/>
</dbReference>
<dbReference type="RefSeq" id="NP_001416059.1">
    <property type="nucleotide sequence ID" value="NM_001429130.1"/>
</dbReference>
<dbReference type="RefSeq" id="XP_006227809.1">
    <property type="nucleotide sequence ID" value="XM_006227747.3"/>
</dbReference>
<dbReference type="RefSeq" id="XP_017444821.1">
    <property type="nucleotide sequence ID" value="XM_017589332.1"/>
</dbReference>
<dbReference type="SMR" id="Q6AYG5"/>
<dbReference type="FunCoup" id="Q6AYG5">
    <property type="interactions" value="1199"/>
</dbReference>
<dbReference type="STRING" id="10116.ENSRNOP00000015440"/>
<dbReference type="iPTMnet" id="Q6AYG5"/>
<dbReference type="PhosphoSitePlus" id="Q6AYG5"/>
<dbReference type="jPOST" id="Q6AYG5"/>
<dbReference type="PaxDb" id="10116-ENSRNOP00000015440"/>
<dbReference type="GeneID" id="361465"/>
<dbReference type="KEGG" id="rno:361465"/>
<dbReference type="UCSC" id="RGD:1359654">
    <property type="organism name" value="rat"/>
</dbReference>
<dbReference type="AGR" id="RGD:1359654"/>
<dbReference type="CTD" id="55862"/>
<dbReference type="RGD" id="1359654">
    <property type="gene designation" value="Echdc1"/>
</dbReference>
<dbReference type="VEuPathDB" id="HostDB:ENSRNOG00000011622"/>
<dbReference type="eggNOG" id="KOG1680">
    <property type="taxonomic scope" value="Eukaryota"/>
</dbReference>
<dbReference type="HOGENOM" id="CLU_009834_7_6_1"/>
<dbReference type="InParanoid" id="Q6AYG5"/>
<dbReference type="PhylomeDB" id="Q6AYG5"/>
<dbReference type="TreeFam" id="TF315986"/>
<dbReference type="PRO" id="PR:Q6AYG5"/>
<dbReference type="Proteomes" id="UP000002494">
    <property type="component" value="Chromosome 1"/>
</dbReference>
<dbReference type="Bgee" id="ENSRNOG00000011622">
    <property type="expression patterns" value="Expressed in pancreas and 20 other cell types or tissues"/>
</dbReference>
<dbReference type="GO" id="GO:0005829">
    <property type="term" value="C:cytosol"/>
    <property type="evidence" value="ECO:0000250"/>
    <property type="project" value="UniProtKB"/>
</dbReference>
<dbReference type="GO" id="GO:0016831">
    <property type="term" value="F:carboxy-lyase activity"/>
    <property type="evidence" value="ECO:0000250"/>
    <property type="project" value="UniProtKB"/>
</dbReference>
<dbReference type="GO" id="GO:0004492">
    <property type="term" value="F:methyl/ethyl malonyl-CoA decarboxylase activity"/>
    <property type="evidence" value="ECO:0007669"/>
    <property type="project" value="UniProtKB-EC"/>
</dbReference>
<dbReference type="GO" id="GO:0006635">
    <property type="term" value="P:fatty acid beta-oxidation"/>
    <property type="evidence" value="ECO:0000318"/>
    <property type="project" value="GO_Central"/>
</dbReference>
<dbReference type="CDD" id="cd06558">
    <property type="entry name" value="crotonase-like"/>
    <property type="match status" value="1"/>
</dbReference>
<dbReference type="FunFam" id="3.90.226.10:FF:000040">
    <property type="entry name" value="Ethylmalonyl-CoA decarboxylase 1"/>
    <property type="match status" value="1"/>
</dbReference>
<dbReference type="Gene3D" id="3.90.226.10">
    <property type="entry name" value="2-enoyl-CoA Hydratase, Chain A, domain 1"/>
    <property type="match status" value="1"/>
</dbReference>
<dbReference type="InterPro" id="IPR029045">
    <property type="entry name" value="ClpP/crotonase-like_dom_sf"/>
</dbReference>
<dbReference type="InterPro" id="IPR018376">
    <property type="entry name" value="Enoyl-CoA_hyd/isom_CS"/>
</dbReference>
<dbReference type="InterPro" id="IPR001753">
    <property type="entry name" value="Enoyl-CoA_hydra/iso"/>
</dbReference>
<dbReference type="PANTHER" id="PTHR11941">
    <property type="entry name" value="ENOYL-COA HYDRATASE-RELATED"/>
    <property type="match status" value="1"/>
</dbReference>
<dbReference type="PANTHER" id="PTHR11941:SF27">
    <property type="entry name" value="ETHYLMALONYL-COA DECARBOXYLASE"/>
    <property type="match status" value="1"/>
</dbReference>
<dbReference type="Pfam" id="PF00378">
    <property type="entry name" value="ECH_1"/>
    <property type="match status" value="1"/>
</dbReference>
<dbReference type="SUPFAM" id="SSF52096">
    <property type="entry name" value="ClpP/crotonase"/>
    <property type="match status" value="1"/>
</dbReference>
<dbReference type="PROSITE" id="PS00166">
    <property type="entry name" value="ENOYL_COA_HYDRATASE"/>
    <property type="match status" value="1"/>
</dbReference>
<evidence type="ECO:0000250" key="1">
    <source>
        <dbReference type="UniProtKB" id="Q9D9V3"/>
    </source>
</evidence>
<evidence type="ECO:0000305" key="2"/>
<organism>
    <name type="scientific">Rattus norvegicus</name>
    <name type="common">Rat</name>
    <dbReference type="NCBI Taxonomy" id="10116"/>
    <lineage>
        <taxon>Eukaryota</taxon>
        <taxon>Metazoa</taxon>
        <taxon>Chordata</taxon>
        <taxon>Craniata</taxon>
        <taxon>Vertebrata</taxon>
        <taxon>Euteleostomi</taxon>
        <taxon>Mammalia</taxon>
        <taxon>Eutheria</taxon>
        <taxon>Euarchontoglires</taxon>
        <taxon>Glires</taxon>
        <taxon>Rodentia</taxon>
        <taxon>Myomorpha</taxon>
        <taxon>Muroidea</taxon>
        <taxon>Muridae</taxon>
        <taxon>Murinae</taxon>
        <taxon>Rattus</taxon>
    </lineage>
</organism>
<gene>
    <name type="primary">Echdc1</name>
</gene>
<sequence length="299" mass="32631">MAKSLLASSLSVRTKILQTGVSLYNTTHGFHEEEVKKILEQFPGGSIDLQKKQNGIGILTLNNSNKMNAFSGAMMLQLLERVIELENWTEGKGLIVHGAKNTFCSGSDLNAVKALSTPENGVALSMFMQNTLTRFMRLPLISVALVQGWAMGGGAELTTACDFRLMTEESVIRFVHKEMGIVPSWGGASRLVEIIGSRQALKVLSGTFKLDSKEALRIGLADEVLQPSDEATALEQAQEWLEQFVSGPAQVIRGLKKSVCSGRELYLEEALQNERDVLETLWGGPANLEAIAKKGKHTK</sequence>
<feature type="chain" id="PRO_0000273249" description="Ethylmalonyl-CoA decarboxylase">
    <location>
        <begin position="1"/>
        <end position="299"/>
    </location>
</feature>
<feature type="modified residue" description="N6-acetyllysine; alternate" evidence="1">
    <location>
        <position position="209"/>
    </location>
</feature>
<feature type="modified residue" description="N6-succinyllysine; alternate" evidence="1">
    <location>
        <position position="209"/>
    </location>
</feature>
<feature type="modified residue" description="N6-succinyllysine" evidence="1">
    <location>
        <position position="293"/>
    </location>
</feature>
<accession>Q6AYG5</accession>
<comment type="function">
    <text evidence="1">Decarboxylates ethylmalonyl-CoA, a potentially toxic metabolite, to form butyryl-CoA, suggesting it might be involved in metabolite proofreading. Acts preferentially on (S)-ethylmalonyl-CoA but also has some activity on the (R)-isomer. Also has methylmalonyl-CoA decarboxylase activity at lower level.</text>
</comment>
<comment type="catalytic activity">
    <reaction evidence="1">
        <text>(2S)-ethylmalonyl-CoA + H(+) = butanoyl-CoA + CO2</text>
        <dbReference type="Rhea" id="RHEA:32131"/>
        <dbReference type="ChEBI" id="CHEBI:15378"/>
        <dbReference type="ChEBI" id="CHEBI:16526"/>
        <dbReference type="ChEBI" id="CHEBI:57371"/>
        <dbReference type="ChEBI" id="CHEBI:60909"/>
        <dbReference type="EC" id="4.1.1.94"/>
    </reaction>
    <physiologicalReaction direction="left-to-right" evidence="1">
        <dbReference type="Rhea" id="RHEA:32132"/>
    </physiologicalReaction>
</comment>
<comment type="catalytic activity">
    <reaction evidence="1">
        <text>(S)-methylmalonyl-CoA + H(+) = propanoyl-CoA + CO2</text>
        <dbReference type="Rhea" id="RHEA:61340"/>
        <dbReference type="ChEBI" id="CHEBI:15378"/>
        <dbReference type="ChEBI" id="CHEBI:16526"/>
        <dbReference type="ChEBI" id="CHEBI:57327"/>
        <dbReference type="ChEBI" id="CHEBI:57392"/>
        <dbReference type="EC" id="4.1.1.94"/>
    </reaction>
    <physiologicalReaction direction="left-to-right" evidence="1">
        <dbReference type="Rhea" id="RHEA:61341"/>
    </physiologicalReaction>
</comment>
<comment type="catalytic activity">
    <reaction evidence="1">
        <text>(2R)-ethylmalonyl-CoA + H(+) = butanoyl-CoA + CO2</text>
        <dbReference type="Rhea" id="RHEA:59540"/>
        <dbReference type="ChEBI" id="CHEBI:15378"/>
        <dbReference type="ChEBI" id="CHEBI:16526"/>
        <dbReference type="ChEBI" id="CHEBI:57371"/>
        <dbReference type="ChEBI" id="CHEBI:85316"/>
        <dbReference type="EC" id="4.1.1.94"/>
    </reaction>
    <physiologicalReaction direction="left-to-right" evidence="1">
        <dbReference type="Rhea" id="RHEA:59541"/>
    </physiologicalReaction>
</comment>
<comment type="subcellular location">
    <subcellularLocation>
        <location evidence="1">Cytoplasm</location>
        <location evidence="1">Cytosol</location>
    </subcellularLocation>
</comment>
<comment type="similarity">
    <text evidence="2">Belongs to the enoyl-CoA hydratase/isomerase family.</text>
</comment>
<keyword id="KW-0007">Acetylation</keyword>
<keyword id="KW-0963">Cytoplasm</keyword>
<keyword id="KW-0903">Direct protein sequencing</keyword>
<keyword id="KW-0456">Lyase</keyword>
<keyword id="KW-1185">Reference proteome</keyword>
<protein>
    <recommendedName>
        <fullName>Ethylmalonyl-CoA decarboxylase</fullName>
        <ecNumber evidence="1">4.1.1.94</ecNumber>
    </recommendedName>
    <alternativeName>
        <fullName>Enoyl-CoA hydratase domain-containing protein 1</fullName>
    </alternativeName>
    <alternativeName>
        <fullName>Methylmalonyl-CoA decarboxylase</fullName>
        <shortName>MMCD</shortName>
    </alternativeName>
</protein>
<reference key="1">
    <citation type="journal article" date="2004" name="Genome Res.">
        <title>The status, quality, and expansion of the NIH full-length cDNA project: the Mammalian Gene Collection (MGC).</title>
        <authorList>
            <consortium name="The MGC Project Team"/>
        </authorList>
    </citation>
    <scope>NUCLEOTIDE SEQUENCE [LARGE SCALE MRNA]</scope>
    <source>
        <tissue>Testis</tissue>
    </source>
</reference>
<reference key="2">
    <citation type="submission" date="2006-12" db="UniProtKB">
        <authorList>
            <person name="Lubec G."/>
            <person name="Afjehi-Sadat L."/>
        </authorList>
    </citation>
    <scope>PROTEIN SEQUENCE OF 38-51</scope>
    <scope>IDENTIFICATION BY MASS SPECTROMETRY</scope>
    <source>
        <strain>Sprague-Dawley</strain>
        <tissue>Spinal cord</tissue>
    </source>
</reference>
<reference key="3">
    <citation type="journal article" date="2011" name="J. Biol. Chem.">
        <title>Ethylmalonyl-CoA decarboxylase, a new enzyme involved in metabolite proofreading.</title>
        <authorList>
            <person name="Linster C.L."/>
            <person name="Noel G."/>
            <person name="Stroobant V."/>
            <person name="Vertommen D."/>
            <person name="Vincent M.F."/>
            <person name="Bommer G.T."/>
            <person name="Veiga-da-Cunha M."/>
            <person name="Van Schaftingen E."/>
        </authorList>
    </citation>
    <scope>IDENTIFICATION BY MASS SPECTROMETRY</scope>
</reference>
<name>ECHD1_RAT</name>